<proteinExistence type="inferred from homology"/>
<comment type="function">
    <text evidence="1">An aminoacyl-tRNA editing enzyme that deacylates mischarged D-aminoacyl-tRNAs. Also deacylates mischarged glycyl-tRNA(Ala), protecting cells against glycine mischarging by AlaRS. Acts via tRNA-based rather than protein-based catalysis; rejects L-amino acids rather than detecting D-amino acids in the active site. By recycling D-aminoacyl-tRNA to D-amino acids and free tRNA molecules, this enzyme counteracts the toxicity associated with the formation of D-aminoacyl-tRNA entities in vivo and helps enforce protein L-homochirality.</text>
</comment>
<comment type="catalytic activity">
    <reaction evidence="1">
        <text>glycyl-tRNA(Ala) + H2O = tRNA(Ala) + glycine + H(+)</text>
        <dbReference type="Rhea" id="RHEA:53744"/>
        <dbReference type="Rhea" id="RHEA-COMP:9657"/>
        <dbReference type="Rhea" id="RHEA-COMP:13640"/>
        <dbReference type="ChEBI" id="CHEBI:15377"/>
        <dbReference type="ChEBI" id="CHEBI:15378"/>
        <dbReference type="ChEBI" id="CHEBI:57305"/>
        <dbReference type="ChEBI" id="CHEBI:78442"/>
        <dbReference type="ChEBI" id="CHEBI:78522"/>
        <dbReference type="EC" id="3.1.1.96"/>
    </reaction>
</comment>
<comment type="catalytic activity">
    <reaction evidence="1">
        <text>a D-aminoacyl-tRNA + H2O = a tRNA + a D-alpha-amino acid + H(+)</text>
        <dbReference type="Rhea" id="RHEA:13953"/>
        <dbReference type="Rhea" id="RHEA-COMP:10123"/>
        <dbReference type="Rhea" id="RHEA-COMP:10124"/>
        <dbReference type="ChEBI" id="CHEBI:15377"/>
        <dbReference type="ChEBI" id="CHEBI:15378"/>
        <dbReference type="ChEBI" id="CHEBI:59871"/>
        <dbReference type="ChEBI" id="CHEBI:78442"/>
        <dbReference type="ChEBI" id="CHEBI:79333"/>
        <dbReference type="EC" id="3.1.1.96"/>
    </reaction>
</comment>
<comment type="subunit">
    <text evidence="1">Homodimer.</text>
</comment>
<comment type="subcellular location">
    <subcellularLocation>
        <location evidence="1">Cytoplasm</location>
    </subcellularLocation>
</comment>
<comment type="domain">
    <text evidence="1">A Gly-cisPro motif from one monomer fits into the active site of the other monomer to allow specific chiral rejection of L-amino acids.</text>
</comment>
<comment type="similarity">
    <text evidence="1">Belongs to the DTD family.</text>
</comment>
<feature type="chain" id="PRO_1000211719" description="D-aminoacyl-tRNA deacylase">
    <location>
        <begin position="1"/>
        <end position="145"/>
    </location>
</feature>
<feature type="short sequence motif" description="Gly-cisPro motif, important for rejection of L-amino acids" evidence="1">
    <location>
        <begin position="137"/>
        <end position="138"/>
    </location>
</feature>
<reference key="1">
    <citation type="journal article" date="2009" name="J. Bacteriol.">
        <title>Genome sequence of Azotobacter vinelandii, an obligate aerobe specialized to support diverse anaerobic metabolic processes.</title>
        <authorList>
            <person name="Setubal J.C."/>
            <person name="Dos Santos P."/>
            <person name="Goldman B.S."/>
            <person name="Ertesvaag H."/>
            <person name="Espin G."/>
            <person name="Rubio L.M."/>
            <person name="Valla S."/>
            <person name="Almeida N.F."/>
            <person name="Balasubramanian D."/>
            <person name="Cromes L."/>
            <person name="Curatti L."/>
            <person name="Du Z."/>
            <person name="Godsy E."/>
            <person name="Goodner B."/>
            <person name="Hellner-Burris K."/>
            <person name="Hernandez J.A."/>
            <person name="Houmiel K."/>
            <person name="Imperial J."/>
            <person name="Kennedy C."/>
            <person name="Larson T.J."/>
            <person name="Latreille P."/>
            <person name="Ligon L.S."/>
            <person name="Lu J."/>
            <person name="Maerk M."/>
            <person name="Miller N.M."/>
            <person name="Norton S."/>
            <person name="O'Carroll I.P."/>
            <person name="Paulsen I."/>
            <person name="Raulfs E.C."/>
            <person name="Roemer R."/>
            <person name="Rosser J."/>
            <person name="Segura D."/>
            <person name="Slater S."/>
            <person name="Stricklin S.L."/>
            <person name="Studholme D.J."/>
            <person name="Sun J."/>
            <person name="Viana C.J."/>
            <person name="Wallin E."/>
            <person name="Wang B."/>
            <person name="Wheeler C."/>
            <person name="Zhu H."/>
            <person name="Dean D.R."/>
            <person name="Dixon R."/>
            <person name="Wood D."/>
        </authorList>
    </citation>
    <scope>NUCLEOTIDE SEQUENCE [LARGE SCALE GENOMIC DNA]</scope>
    <source>
        <strain>DJ / ATCC BAA-1303</strain>
    </source>
</reference>
<keyword id="KW-0963">Cytoplasm</keyword>
<keyword id="KW-0378">Hydrolase</keyword>
<keyword id="KW-0694">RNA-binding</keyword>
<keyword id="KW-0820">tRNA-binding</keyword>
<evidence type="ECO:0000255" key="1">
    <source>
        <dbReference type="HAMAP-Rule" id="MF_00518"/>
    </source>
</evidence>
<gene>
    <name evidence="1" type="primary">dtd</name>
    <name type="ordered locus">Avin_45550</name>
</gene>
<organism>
    <name type="scientific">Azotobacter vinelandii (strain DJ / ATCC BAA-1303)</name>
    <dbReference type="NCBI Taxonomy" id="322710"/>
    <lineage>
        <taxon>Bacteria</taxon>
        <taxon>Pseudomonadati</taxon>
        <taxon>Pseudomonadota</taxon>
        <taxon>Gammaproteobacteria</taxon>
        <taxon>Pseudomonadales</taxon>
        <taxon>Pseudomonadaceae</taxon>
        <taxon>Azotobacter</taxon>
    </lineage>
</organism>
<accession>C1DHT6</accession>
<protein>
    <recommendedName>
        <fullName evidence="1">D-aminoacyl-tRNA deacylase</fullName>
        <shortName evidence="1">DTD</shortName>
        <ecNumber evidence="1">3.1.1.96</ecNumber>
    </recommendedName>
    <alternativeName>
        <fullName evidence="1">Gly-tRNA(Ala) deacylase</fullName>
    </alternativeName>
</protein>
<sequence>MKALIQRVAKAQVTVAGEEVGAIGPGLLALVGIEPQDDRESIGRMLHRLLNYRVFADAEGRMNLSLAQLGGGLLLVSQFTLAADTRSGLRPSFSSAAPPAQGQALFEALLALARERHPQVAGGRFGAHMRVELVNDGPVTFLLEA</sequence>
<dbReference type="EC" id="3.1.1.96" evidence="1"/>
<dbReference type="EMBL" id="CP001157">
    <property type="protein sequence ID" value="ACO80669.1"/>
    <property type="molecule type" value="Genomic_DNA"/>
</dbReference>
<dbReference type="RefSeq" id="WP_012703036.1">
    <property type="nucleotide sequence ID" value="NC_012560.1"/>
</dbReference>
<dbReference type="SMR" id="C1DHT6"/>
<dbReference type="STRING" id="322710.Avin_45550"/>
<dbReference type="EnsemblBacteria" id="ACO80669">
    <property type="protein sequence ID" value="ACO80669"/>
    <property type="gene ID" value="Avin_45550"/>
</dbReference>
<dbReference type="GeneID" id="88187439"/>
<dbReference type="KEGG" id="avn:Avin_45550"/>
<dbReference type="eggNOG" id="COG1490">
    <property type="taxonomic scope" value="Bacteria"/>
</dbReference>
<dbReference type="HOGENOM" id="CLU_076901_1_1_6"/>
<dbReference type="OrthoDB" id="9801395at2"/>
<dbReference type="Proteomes" id="UP000002424">
    <property type="component" value="Chromosome"/>
</dbReference>
<dbReference type="GO" id="GO:0005737">
    <property type="term" value="C:cytoplasm"/>
    <property type="evidence" value="ECO:0007669"/>
    <property type="project" value="UniProtKB-SubCell"/>
</dbReference>
<dbReference type="GO" id="GO:0051500">
    <property type="term" value="F:D-tyrosyl-tRNA(Tyr) deacylase activity"/>
    <property type="evidence" value="ECO:0007669"/>
    <property type="project" value="TreeGrafter"/>
</dbReference>
<dbReference type="GO" id="GO:0106026">
    <property type="term" value="F:Gly-tRNA(Ala) deacylase activity"/>
    <property type="evidence" value="ECO:0007669"/>
    <property type="project" value="UniProtKB-UniRule"/>
</dbReference>
<dbReference type="GO" id="GO:0043908">
    <property type="term" value="F:Ser(Gly)-tRNA(Ala) hydrolase activity"/>
    <property type="evidence" value="ECO:0007669"/>
    <property type="project" value="UniProtKB-UniRule"/>
</dbReference>
<dbReference type="GO" id="GO:0000049">
    <property type="term" value="F:tRNA binding"/>
    <property type="evidence" value="ECO:0007669"/>
    <property type="project" value="UniProtKB-UniRule"/>
</dbReference>
<dbReference type="GO" id="GO:0019478">
    <property type="term" value="P:D-amino acid catabolic process"/>
    <property type="evidence" value="ECO:0007669"/>
    <property type="project" value="UniProtKB-UniRule"/>
</dbReference>
<dbReference type="FunFam" id="3.50.80.10:FF:000001">
    <property type="entry name" value="D-aminoacyl-tRNA deacylase"/>
    <property type="match status" value="1"/>
</dbReference>
<dbReference type="Gene3D" id="3.50.80.10">
    <property type="entry name" value="D-tyrosyl-tRNA(Tyr) deacylase"/>
    <property type="match status" value="1"/>
</dbReference>
<dbReference type="HAMAP" id="MF_00518">
    <property type="entry name" value="Deacylase_Dtd"/>
    <property type="match status" value="1"/>
</dbReference>
<dbReference type="InterPro" id="IPR003732">
    <property type="entry name" value="Daa-tRNA_deacyls_DTD"/>
</dbReference>
<dbReference type="InterPro" id="IPR023509">
    <property type="entry name" value="DTD-like_sf"/>
</dbReference>
<dbReference type="NCBIfam" id="TIGR00256">
    <property type="entry name" value="D-aminoacyl-tRNA deacylase"/>
    <property type="match status" value="1"/>
</dbReference>
<dbReference type="PANTHER" id="PTHR10472:SF5">
    <property type="entry name" value="D-AMINOACYL-TRNA DEACYLASE 1"/>
    <property type="match status" value="1"/>
</dbReference>
<dbReference type="PANTHER" id="PTHR10472">
    <property type="entry name" value="D-TYROSYL-TRNA TYR DEACYLASE"/>
    <property type="match status" value="1"/>
</dbReference>
<dbReference type="Pfam" id="PF02580">
    <property type="entry name" value="Tyr_Deacylase"/>
    <property type="match status" value="1"/>
</dbReference>
<dbReference type="SUPFAM" id="SSF69500">
    <property type="entry name" value="DTD-like"/>
    <property type="match status" value="1"/>
</dbReference>
<name>DTD_AZOVD</name>